<name>Y2597_MYCBO</name>
<feature type="chain" id="PRO_0000104043" description="Uncharacterized protein Mb2597">
    <location>
        <begin position="1"/>
        <end position="884"/>
    </location>
</feature>
<proteinExistence type="predicted"/>
<dbReference type="EMBL" id="LT708304">
    <property type="protein sequence ID" value="SIU01215.1"/>
    <property type="molecule type" value="Genomic_DNA"/>
</dbReference>
<dbReference type="RefSeq" id="NP_856243.1">
    <property type="nucleotide sequence ID" value="NC_002945.3"/>
</dbReference>
<dbReference type="RefSeq" id="WP_003413330.1">
    <property type="nucleotide sequence ID" value="NC_002945.4"/>
</dbReference>
<dbReference type="SMR" id="P59974"/>
<dbReference type="KEGG" id="mbo:BQ2027_MB2597"/>
<dbReference type="PATRIC" id="fig|233413.5.peg.2856"/>
<dbReference type="Proteomes" id="UP000001419">
    <property type="component" value="Chromosome"/>
</dbReference>
<dbReference type="FunFam" id="3.40.50.11290:FF:000001">
    <property type="entry name" value="Hypothetical alanine and leucine rich protein"/>
    <property type="match status" value="1"/>
</dbReference>
<dbReference type="Gene3D" id="3.30.1490.270">
    <property type="match status" value="1"/>
</dbReference>
<dbReference type="Gene3D" id="3.40.50.11290">
    <property type="match status" value="1"/>
</dbReference>
<dbReference type="InterPro" id="IPR051680">
    <property type="entry name" value="ATP-dep_Glu-Cys_Ligase-2"/>
</dbReference>
<dbReference type="InterPro" id="IPR007302">
    <property type="entry name" value="CP_ATPgrasp"/>
</dbReference>
<dbReference type="InterPro" id="IPR007296">
    <property type="entry name" value="DUF403"/>
</dbReference>
<dbReference type="PANTHER" id="PTHR34595:SF2">
    <property type="entry name" value="BLR2978 PROTEIN"/>
    <property type="match status" value="1"/>
</dbReference>
<dbReference type="PANTHER" id="PTHR34595">
    <property type="entry name" value="BLR5612 PROTEIN"/>
    <property type="match status" value="1"/>
</dbReference>
<dbReference type="Pfam" id="PF04168">
    <property type="entry name" value="Alpha-E"/>
    <property type="match status" value="1"/>
</dbReference>
<dbReference type="Pfam" id="PF04174">
    <property type="entry name" value="CP_ATPgrasp_1"/>
    <property type="match status" value="1"/>
</dbReference>
<dbReference type="SUPFAM" id="SSF56059">
    <property type="entry name" value="Glutathione synthetase ATP-binding domain-like"/>
    <property type="match status" value="1"/>
</dbReference>
<keyword id="KW-1185">Reference proteome</keyword>
<reference key="1">
    <citation type="journal article" date="2003" name="Proc. Natl. Acad. Sci. U.S.A.">
        <title>The complete genome sequence of Mycobacterium bovis.</title>
        <authorList>
            <person name="Garnier T."/>
            <person name="Eiglmeier K."/>
            <person name="Camus J.-C."/>
            <person name="Medina N."/>
            <person name="Mansoor H."/>
            <person name="Pryor M."/>
            <person name="Duthoy S."/>
            <person name="Grondin S."/>
            <person name="Lacroix C."/>
            <person name="Monsempe C."/>
            <person name="Simon S."/>
            <person name="Harris B."/>
            <person name="Atkin R."/>
            <person name="Doggett J."/>
            <person name="Mayes R."/>
            <person name="Keating L."/>
            <person name="Wheeler P.R."/>
            <person name="Parkhill J."/>
            <person name="Barrell B.G."/>
            <person name="Cole S.T."/>
            <person name="Gordon S.V."/>
            <person name="Hewinson R.G."/>
        </authorList>
    </citation>
    <scope>NUCLEOTIDE SEQUENCE [LARGE SCALE GENOMIC DNA]</scope>
    <source>
        <strain>ATCC BAA-935 / AF2122/97</strain>
    </source>
</reference>
<reference key="2">
    <citation type="journal article" date="2017" name="Genome Announc.">
        <title>Updated reference genome sequence and annotation of Mycobacterium bovis AF2122/97.</title>
        <authorList>
            <person name="Malone K.M."/>
            <person name="Farrell D."/>
            <person name="Stuber T.P."/>
            <person name="Schubert O.T."/>
            <person name="Aebersold R."/>
            <person name="Robbe-Austerman S."/>
            <person name="Gordon S.V."/>
        </authorList>
    </citation>
    <scope>NUCLEOTIDE SEQUENCE [LARGE SCALE GENOMIC DNA]</scope>
    <scope>GENOME REANNOTATION</scope>
    <source>
        <strain>ATCC BAA-935 / AF2122/97</strain>
    </source>
</reference>
<organism>
    <name type="scientific">Mycobacterium bovis (strain ATCC BAA-935 / AF2122/97)</name>
    <dbReference type="NCBI Taxonomy" id="233413"/>
    <lineage>
        <taxon>Bacteria</taxon>
        <taxon>Bacillati</taxon>
        <taxon>Actinomycetota</taxon>
        <taxon>Actinomycetes</taxon>
        <taxon>Mycobacteriales</taxon>
        <taxon>Mycobacteriaceae</taxon>
        <taxon>Mycobacterium</taxon>
        <taxon>Mycobacterium tuberculosis complex</taxon>
    </lineage>
</organism>
<sequence>MAPSASAATNGYDVDRLLAGYRTARAQETLFDLRDGPGAGYDEFVDDDGNVRPTWTELADAVAERGKAGLDRLRSVVHSLIDHDGITYTAIDAHRDALTGDHDLEPGPWRLDPLPLVISAADWEVLEAGLVQRSRLLDAILADLYGPRSMLTEGVLPPEMLFAHPGYVRAANGIQMPGRHQLFMHACDLSRLPDGTFQVNADWTQAPSGSGYAMADRRVVAHAVPDLYEELAPRPTTPFAQALRLALIDAAPDVAQDPVVVVLSPGIYSETAFDQAYLATLLGFPLVESADLVVRDGKLWMRSLGTLKRVDVVLRRVDAHYADPLDLRADSRLGVVGLVEAQHRGTVTVVNTLGSGILENPGLLRFLPQLSERLLDESPLLHTAPVYWGGIASERSHLLANVSSLLIKSTVSGETLVGPTLSSAQLADLAVRIEAMPWQWVGQELPQFSSAPTNHAGVLSSAGVGMRLFTVAQRSGYAPMIGGLGYVLAPGPAAYTLKTVAAKDIWVRPTERAHAEVITVPVLAPPAKTGAGTWAVSSPRVLSDLFWMGRYGERAENMARLLIVTRERYHVFRHQQDTDESECVPVLMAALGKITGYDTATGAGSAYDRADMIAVAPSTLWSLTVDPDRPGSLVQSVEGLALAARAVRDQLSNDTWMVLANVERAVEHKSDPPQSLAEADAVLASAQAETLAGMLTLSGVAGESMVHDVGWTMMDIGKRIERGLWLTALLQATLSTVRHPAAEQAIIEATLVACESSVIYRRRTVGKFSVAAVTELMLFDAQNPRSLVYQLERLRADLKDLPGSSGSSRPERMVDEMNTRLRRSHPEELEEVSADGLRAELAELLAGIHASLRDVADVLTATQLALPGGMQPLWGPDQRRVMPA</sequence>
<gene>
    <name type="ordered locus">BQ2027_MB2597</name>
</gene>
<protein>
    <recommendedName>
        <fullName>Uncharacterized protein Mb2597</fullName>
    </recommendedName>
</protein>
<accession>P59974</accession>
<accession>A0A1R3Y3P1</accession>
<accession>X2BLQ4</accession>